<protein>
    <recommendedName>
        <fullName evidence="7">Gamma-aminobutyric acid receptor-associated protein</fullName>
    </recommendedName>
    <alternativeName>
        <fullName>GABA(A) receptor-associated protein</fullName>
    </alternativeName>
</protein>
<comment type="function">
    <text evidence="1 5">Ubiquitin-like modifier that plays a role in intracellular transport of GABA(A) receptors and its interaction with the cytoskeleton (PubMed:11461150). Involved in autophagy: while LC3s are involved in elongation of the phagophore membrane, the GABARAP/GATE-16 subfamily is essential for a later stage in autophagosome maturation (By similarity). Through its interaction with the reticulophagy receptor TEX264, participates in the remodeling of subdomains of the endoplasmic reticulum into autophagosomes upon nutrient stress, which then fuse with lysosomes for endoplasmic reticulum turnover (By similarity). Also required for the local activation of the CUL3(KBTBD6/7) E3 ubiquitin ligase complex, regulating ubiquitination a nd degradation of TIAM1, a guanyl-nucleotide exchange factor (GEF) that activates RAC1 and downstream signal transduction. Thereby, regulates different biological processes including the organization of the cytoskeleton, cell migration and proliferation (By similarity). Involved in apoptosis (By similarity).</text>
</comment>
<comment type="subunit">
    <text evidence="1 2 3 4 5 6">Interacts with GPHN and NSF (PubMed:10900017, PubMed:11461150). Interacts with ATG3, ATG7 and ATG13 (By similarity). Interacts with alpha-tubulin (By similarity). Interacts with beta-tubulin (PubMed:10899939). Interacts with GABRG2 (By similarity). Interacts with RB1CC1 (By similarity). Interacts with ULK1 (By similarity). Interacts with CALR (By similarity). Interacts with DDX47 (By similarity). Interacts with TP53INP1 and TP53INP2 (By similarity). Interacts with TBC1D5 (By similarity). Interacts with TBC1D25 (By similarity). Directly interacts with SQSTM1 (By similarity). Interacts with MAPK15 (By similarity). Interacts with TECPR2 (By similarity). Interacts with PCM1 (By similarity). Interacts with TRIM5 and TRIM21 (By similarity). Interacts with MEFV (By similarity). Interacts with KIF21B (PubMed:25172774). Interacts with WDFY3; this interaction is required for WDFY3 recruitment to MAP1LC3B-positive p62/SQSTM1 bodies (By similarity). Interacts with FLCN; interaction regulates autophagy (By similarity). Interacts with UBA5 (By similarity). Interacts with KBTBD6 and KBTBD7; the interaction is direct and required for the ubiquitination of TIAM1 (By similarity). Interacts with reticulophagy regulators RETREG1, RETREG2 and RETREG3 (By similarity). Interacts with IRGM (By similarity). Interacts with STX17 (By similarity). Interacts with CT55; this interaction may be important for GABARAP protein stability (By similarity). Interacts with DNM2 (By similarity). Interacts with NCOA4 (via C-terminus) (By similarity).</text>
</comment>
<comment type="subcellular location">
    <subcellularLocation>
        <location evidence="1">Cytoplasmic vesicle</location>
        <location evidence="1">Autophagosome membrane</location>
    </subcellularLocation>
    <subcellularLocation>
        <location evidence="5">Endomembrane system</location>
    </subcellularLocation>
    <subcellularLocation>
        <location evidence="3">Cytoplasm</location>
        <location evidence="3">Cytoskeleton</location>
    </subcellularLocation>
    <subcellularLocation>
        <location evidence="5">Golgi apparatus membrane</location>
    </subcellularLocation>
    <subcellularLocation>
        <location evidence="6">Cytoplasmic vesicle</location>
    </subcellularLocation>
    <text evidence="2 3 5">Largely associated with intracellular membrane structures including the Golgi apparatus and postsynaptic cisternae (PubMed:11461150). Colocalizes with microtubules (PubMed:10899939). Also localizes to discrete punctae along the ciliary axoneme (By similarity).</text>
</comment>
<comment type="tissue specificity">
    <text evidence="5 6">Expressed in brain (at protein level) (PubMed:25172774). Can be found in both somatodendritic and axonal compartment of neurons (PubMed:11461150).</text>
</comment>
<comment type="PTM">
    <text evidence="1 2">The precursor molecule is cleaved by ATG4 (ATG4A, ATG4B, ATG4C or ATG4D) to expose the glycine at the C-terminus and form the cytosolic form, GABARAP-I. The processed form is then activated by APG7L/ATG7, transferred to ATG3 and conjugated to phosphatidylethanolamine (PE) phospholipid to form the membrane-bound form, GABARAP-II. During non-canonical autophagy, the processed form is conjugated to phosphatidylserine (PS) phospholipid. ATG4 proteins also mediate the delipidation of PE-conjugated forms. In addition, ATG4B and ATG4D mediate delipidation of ATG8 proteins conjugated to PS during non-canonical autophagy. ATG4B constitutes the major protein for proteolytic activation (By similarity). ATG4D is the main enzyme for delipidation activity (By similarity).</text>
</comment>
<comment type="similarity">
    <text evidence="7">Belongs to the ATG8 family.</text>
</comment>
<gene>
    <name evidence="8" type="primary">Gabarap</name>
</gene>
<name>GBRAP_RAT</name>
<feature type="chain" id="PRO_0000212366" description="Gamma-aminobutyric acid receptor-associated protein">
    <location>
        <begin position="1"/>
        <end position="116"/>
    </location>
</feature>
<feature type="propeptide" id="PRO_0000423068" description="Removed in mature form" evidence="1">
    <location>
        <position position="117"/>
    </location>
</feature>
<feature type="region of interest" description="Interaction with beta-tubulin" evidence="3">
    <location>
        <begin position="1"/>
        <end position="22"/>
    </location>
</feature>
<feature type="region of interest" description="Interaction with GPHN" evidence="4">
    <location>
        <begin position="36"/>
        <end position="117"/>
    </location>
</feature>
<feature type="region of interest" description="Interaction with GABRG2" evidence="1">
    <location>
        <begin position="36"/>
        <end position="68"/>
    </location>
</feature>
<feature type="region of interest" description="Interaction with LIR (LC3 nteracting Region) motif of ATG3" evidence="1">
    <location>
        <begin position="48"/>
        <end position="50"/>
    </location>
</feature>
<feature type="site" description="Interaction with LIR (LC3 nteracting Region) motif of ATG3" evidence="1">
    <location>
        <position position="17"/>
    </location>
</feature>
<feature type="site" description="Interaction with LIR (LC3 nteracting Region) motif of ATG3" evidence="1">
    <location>
        <position position="28"/>
    </location>
</feature>
<feature type="site" description="Cleavage; by ATG4B" evidence="1">
    <location>
        <begin position="116"/>
        <end position="117"/>
    </location>
</feature>
<feature type="lipid moiety-binding region" description="Phosphatidylethanolamine amidated glycine; alternate" evidence="1">
    <location>
        <position position="116"/>
    </location>
</feature>
<feature type="lipid moiety-binding region" description="Phosphatidylserine amidated glycine; alternate" evidence="1">
    <location>
        <position position="116"/>
    </location>
</feature>
<feature type="helix" evidence="9">
    <location>
        <begin position="4"/>
        <end position="8"/>
    </location>
</feature>
<feature type="helix" evidence="9">
    <location>
        <begin position="11"/>
        <end position="24"/>
    </location>
</feature>
<feature type="strand" evidence="9">
    <location>
        <begin position="28"/>
        <end position="35"/>
    </location>
</feature>
<feature type="strand" evidence="9">
    <location>
        <begin position="48"/>
        <end position="52"/>
    </location>
</feature>
<feature type="helix" evidence="9">
    <location>
        <begin position="57"/>
        <end position="68"/>
    </location>
</feature>
<feature type="strand" evidence="9">
    <location>
        <begin position="77"/>
        <end position="82"/>
    </location>
</feature>
<feature type="helix" evidence="9">
    <location>
        <begin position="91"/>
        <end position="98"/>
    </location>
</feature>
<feature type="strand" evidence="9">
    <location>
        <begin position="105"/>
        <end position="112"/>
    </location>
</feature>
<keyword id="KW-0002">3D-structure</keyword>
<keyword id="KW-0053">Apoptosis</keyword>
<keyword id="KW-0072">Autophagy</keyword>
<keyword id="KW-0963">Cytoplasm</keyword>
<keyword id="KW-0968">Cytoplasmic vesicle</keyword>
<keyword id="KW-0206">Cytoskeleton</keyword>
<keyword id="KW-0333">Golgi apparatus</keyword>
<keyword id="KW-0449">Lipoprotein</keyword>
<keyword id="KW-0472">Membrane</keyword>
<keyword id="KW-0493">Microtubule</keyword>
<keyword id="KW-0653">Protein transport</keyword>
<keyword id="KW-1185">Reference proteome</keyword>
<keyword id="KW-0813">Transport</keyword>
<dbReference type="EMBL" id="AF161588">
    <property type="protein sequence ID" value="AAD47643.1"/>
    <property type="molecule type" value="mRNA"/>
</dbReference>
<dbReference type="EMBL" id="BC058441">
    <property type="protein sequence ID" value="AAH58441.1"/>
    <property type="molecule type" value="mRNA"/>
</dbReference>
<dbReference type="RefSeq" id="NP_742033.1">
    <property type="nucleotide sequence ID" value="NM_172036.4"/>
</dbReference>
<dbReference type="PDB" id="1KJT">
    <property type="method" value="X-ray"/>
    <property type="resolution" value="2.00 A"/>
    <property type="chains" value="A=1-117"/>
</dbReference>
<dbReference type="PDBsum" id="1KJT"/>
<dbReference type="BMRB" id="P60517"/>
<dbReference type="SMR" id="P60517"/>
<dbReference type="BioGRID" id="248705">
    <property type="interactions" value="5"/>
</dbReference>
<dbReference type="FunCoup" id="P60517">
    <property type="interactions" value="3113"/>
</dbReference>
<dbReference type="IntAct" id="P60517">
    <property type="interactions" value="1"/>
</dbReference>
<dbReference type="STRING" id="10116.ENSRNOP00000023724"/>
<dbReference type="GlyGen" id="P60517">
    <property type="glycosylation" value="1 site"/>
</dbReference>
<dbReference type="iPTMnet" id="P60517"/>
<dbReference type="PhosphoSitePlus" id="P60517"/>
<dbReference type="PaxDb" id="10116-ENSRNOP00000023724"/>
<dbReference type="GeneID" id="58974"/>
<dbReference type="KEGG" id="rno:58974"/>
<dbReference type="UCSC" id="RGD:61911">
    <property type="organism name" value="rat"/>
</dbReference>
<dbReference type="AGR" id="RGD:61911"/>
<dbReference type="CTD" id="11337"/>
<dbReference type="RGD" id="61911">
    <property type="gene designation" value="Gabarap"/>
</dbReference>
<dbReference type="VEuPathDB" id="HostDB:ENSRNOG00000017417"/>
<dbReference type="eggNOG" id="KOG1654">
    <property type="taxonomic scope" value="Eukaryota"/>
</dbReference>
<dbReference type="HOGENOM" id="CLU_119276_0_0_1"/>
<dbReference type="InParanoid" id="P60517"/>
<dbReference type="OrthoDB" id="6738456at2759"/>
<dbReference type="PhylomeDB" id="P60517"/>
<dbReference type="TreeFam" id="TF314556"/>
<dbReference type="Reactome" id="R-RNO-1632852">
    <property type="pathway name" value="Macroautophagy"/>
</dbReference>
<dbReference type="Reactome" id="R-RNO-8854214">
    <property type="pathway name" value="TBC/RABGAPs"/>
</dbReference>
<dbReference type="EvolutionaryTrace" id="P60517"/>
<dbReference type="PRO" id="PR:P60517"/>
<dbReference type="Proteomes" id="UP000002494">
    <property type="component" value="Chromosome 10"/>
</dbReference>
<dbReference type="Bgee" id="ENSRNOG00000017417">
    <property type="expression patterns" value="Expressed in testis and 20 other cell types or tissues"/>
</dbReference>
<dbReference type="GO" id="GO:0015629">
    <property type="term" value="C:actin cytoskeleton"/>
    <property type="evidence" value="ECO:0000266"/>
    <property type="project" value="RGD"/>
</dbReference>
<dbReference type="GO" id="GO:0005776">
    <property type="term" value="C:autophagosome"/>
    <property type="evidence" value="ECO:0000250"/>
    <property type="project" value="UniProtKB"/>
</dbReference>
<dbReference type="GO" id="GO:0000421">
    <property type="term" value="C:autophagosome membrane"/>
    <property type="evidence" value="ECO:0000266"/>
    <property type="project" value="RGD"/>
</dbReference>
<dbReference type="GO" id="GO:0005930">
    <property type="term" value="C:axoneme"/>
    <property type="evidence" value="ECO:0000250"/>
    <property type="project" value="UniProtKB"/>
</dbReference>
<dbReference type="GO" id="GO:0044297">
    <property type="term" value="C:cell body"/>
    <property type="evidence" value="ECO:0000314"/>
    <property type="project" value="RGD"/>
</dbReference>
<dbReference type="GO" id="GO:0031410">
    <property type="term" value="C:cytoplasmic vesicle"/>
    <property type="evidence" value="ECO:0007669"/>
    <property type="project" value="UniProtKB-KW"/>
</dbReference>
<dbReference type="GO" id="GO:0098982">
    <property type="term" value="C:GABA-ergic synapse"/>
    <property type="evidence" value="ECO:0000314"/>
    <property type="project" value="SynGO"/>
</dbReference>
<dbReference type="GO" id="GO:0005794">
    <property type="term" value="C:Golgi apparatus"/>
    <property type="evidence" value="ECO:0000266"/>
    <property type="project" value="RGD"/>
</dbReference>
<dbReference type="GO" id="GO:0000139">
    <property type="term" value="C:Golgi membrane"/>
    <property type="evidence" value="ECO:0007669"/>
    <property type="project" value="UniProtKB-SubCell"/>
</dbReference>
<dbReference type="GO" id="GO:0005764">
    <property type="term" value="C:lysosome"/>
    <property type="evidence" value="ECO:0000266"/>
    <property type="project" value="RGD"/>
</dbReference>
<dbReference type="GO" id="GO:0005874">
    <property type="term" value="C:microtubule"/>
    <property type="evidence" value="ECO:0007669"/>
    <property type="project" value="UniProtKB-KW"/>
</dbReference>
<dbReference type="GO" id="GO:0005875">
    <property type="term" value="C:microtubule associated complex"/>
    <property type="evidence" value="ECO:0000266"/>
    <property type="project" value="RGD"/>
</dbReference>
<dbReference type="GO" id="GO:0048471">
    <property type="term" value="C:perinuclear region of cytoplasm"/>
    <property type="evidence" value="ECO:0000314"/>
    <property type="project" value="RGD"/>
</dbReference>
<dbReference type="GO" id="GO:0005886">
    <property type="term" value="C:plasma membrane"/>
    <property type="evidence" value="ECO:0000266"/>
    <property type="project" value="RGD"/>
</dbReference>
<dbReference type="GO" id="GO:0099091">
    <property type="term" value="C:postsynaptic specialization, intracellular component"/>
    <property type="evidence" value="ECO:0000314"/>
    <property type="project" value="SynGO"/>
</dbReference>
<dbReference type="GO" id="GO:0005790">
    <property type="term" value="C:smooth endoplasmic reticulum"/>
    <property type="evidence" value="ECO:0000266"/>
    <property type="project" value="RGD"/>
</dbReference>
<dbReference type="GO" id="GO:0097225">
    <property type="term" value="C:sperm midpiece"/>
    <property type="evidence" value="ECO:0000266"/>
    <property type="project" value="RGD"/>
</dbReference>
<dbReference type="GO" id="GO:0048487">
    <property type="term" value="F:beta-tubulin binding"/>
    <property type="evidence" value="ECO:0000266"/>
    <property type="project" value="RGD"/>
</dbReference>
<dbReference type="GO" id="GO:0050811">
    <property type="term" value="F:GABA receptor binding"/>
    <property type="evidence" value="ECO:0000353"/>
    <property type="project" value="RGD"/>
</dbReference>
<dbReference type="GO" id="GO:0008017">
    <property type="term" value="F:microtubule binding"/>
    <property type="evidence" value="ECO:0000266"/>
    <property type="project" value="RGD"/>
</dbReference>
<dbReference type="GO" id="GO:0008429">
    <property type="term" value="F:phosphatidylethanolamine binding"/>
    <property type="evidence" value="ECO:0000266"/>
    <property type="project" value="RGD"/>
</dbReference>
<dbReference type="GO" id="GO:0031625">
    <property type="term" value="F:ubiquitin protein ligase binding"/>
    <property type="evidence" value="ECO:0000266"/>
    <property type="project" value="RGD"/>
</dbReference>
<dbReference type="GO" id="GO:0000045">
    <property type="term" value="P:autophagosome assembly"/>
    <property type="evidence" value="ECO:0000318"/>
    <property type="project" value="GO_Central"/>
</dbReference>
<dbReference type="GO" id="GO:0097352">
    <property type="term" value="P:autophagosome maturation"/>
    <property type="evidence" value="ECO:0000318"/>
    <property type="project" value="GO_Central"/>
</dbReference>
<dbReference type="GO" id="GO:0006995">
    <property type="term" value="P:cellular response to nitrogen starvation"/>
    <property type="evidence" value="ECO:0000318"/>
    <property type="project" value="GO_Central"/>
</dbReference>
<dbReference type="GO" id="GO:0008625">
    <property type="term" value="P:extrinsic apoptotic signaling pathway via death domain receptors"/>
    <property type="evidence" value="ECO:0000250"/>
    <property type="project" value="UniProtKB"/>
</dbReference>
<dbReference type="GO" id="GO:0000226">
    <property type="term" value="P:microtubule cytoskeleton organization"/>
    <property type="evidence" value="ECO:0000266"/>
    <property type="project" value="RGD"/>
</dbReference>
<dbReference type="GO" id="GO:0000423">
    <property type="term" value="P:mitophagy"/>
    <property type="evidence" value="ECO:0000318"/>
    <property type="project" value="GO_Central"/>
</dbReference>
<dbReference type="GO" id="GO:0032436">
    <property type="term" value="P:positive regulation of proteasomal ubiquitin-dependent protein catabolic process"/>
    <property type="evidence" value="ECO:0000250"/>
    <property type="project" value="UniProtKB"/>
</dbReference>
<dbReference type="GO" id="GO:1902524">
    <property type="term" value="P:positive regulation of protein K48-linked ubiquitination"/>
    <property type="evidence" value="ECO:0000250"/>
    <property type="project" value="UniProtKB"/>
</dbReference>
<dbReference type="GO" id="GO:0015031">
    <property type="term" value="P:protein transport"/>
    <property type="evidence" value="ECO:0007669"/>
    <property type="project" value="UniProtKB-KW"/>
</dbReference>
<dbReference type="GO" id="GO:0098696">
    <property type="term" value="P:regulation of neurotransmitter receptor localization to postsynaptic specialization membrane"/>
    <property type="evidence" value="ECO:0000266"/>
    <property type="project" value="RGD"/>
</dbReference>
<dbReference type="GO" id="GO:0035020">
    <property type="term" value="P:regulation of Rac protein signal transduction"/>
    <property type="evidence" value="ECO:0000250"/>
    <property type="project" value="UniProtKB"/>
</dbReference>
<dbReference type="CDD" id="cd17232">
    <property type="entry name" value="Ubl_ATG8_GABARAP"/>
    <property type="match status" value="1"/>
</dbReference>
<dbReference type="FunFam" id="3.10.20.90:FF:000037">
    <property type="entry name" value="Gamma-aminobutyric acid receptor-associated protein-like 1"/>
    <property type="match status" value="1"/>
</dbReference>
<dbReference type="Gene3D" id="3.10.20.90">
    <property type="entry name" value="Phosphatidylinositol 3-kinase Catalytic Subunit, Chain A, domain 1"/>
    <property type="match status" value="1"/>
</dbReference>
<dbReference type="InterPro" id="IPR004241">
    <property type="entry name" value="Atg8-like"/>
</dbReference>
<dbReference type="InterPro" id="IPR029071">
    <property type="entry name" value="Ubiquitin-like_domsf"/>
</dbReference>
<dbReference type="PANTHER" id="PTHR10969">
    <property type="entry name" value="MICROTUBULE-ASSOCIATED PROTEINS 1A/1B LIGHT CHAIN 3-RELATED"/>
    <property type="match status" value="1"/>
</dbReference>
<dbReference type="Pfam" id="PF02991">
    <property type="entry name" value="ATG8"/>
    <property type="match status" value="1"/>
</dbReference>
<dbReference type="SUPFAM" id="SSF54236">
    <property type="entry name" value="Ubiquitin-like"/>
    <property type="match status" value="1"/>
</dbReference>
<proteinExistence type="evidence at protein level"/>
<accession>P60517</accession>
<accession>Q9QUI7</accession>
<organism>
    <name type="scientific">Rattus norvegicus</name>
    <name type="common">Rat</name>
    <dbReference type="NCBI Taxonomy" id="10116"/>
    <lineage>
        <taxon>Eukaryota</taxon>
        <taxon>Metazoa</taxon>
        <taxon>Chordata</taxon>
        <taxon>Craniata</taxon>
        <taxon>Vertebrata</taxon>
        <taxon>Euteleostomi</taxon>
        <taxon>Mammalia</taxon>
        <taxon>Eutheria</taxon>
        <taxon>Euarchontoglires</taxon>
        <taxon>Glires</taxon>
        <taxon>Rodentia</taxon>
        <taxon>Myomorpha</taxon>
        <taxon>Muroidea</taxon>
        <taxon>Muridae</taxon>
        <taxon>Murinae</taxon>
        <taxon>Rattus</taxon>
    </lineage>
</organism>
<evidence type="ECO:0000250" key="1">
    <source>
        <dbReference type="UniProtKB" id="O95166"/>
    </source>
</evidence>
<evidence type="ECO:0000250" key="2">
    <source>
        <dbReference type="UniProtKB" id="Q9DCD6"/>
    </source>
</evidence>
<evidence type="ECO:0000269" key="3">
    <source>
    </source>
</evidence>
<evidence type="ECO:0000269" key="4">
    <source>
    </source>
</evidence>
<evidence type="ECO:0000269" key="5">
    <source>
    </source>
</evidence>
<evidence type="ECO:0000269" key="6">
    <source>
    </source>
</evidence>
<evidence type="ECO:0000305" key="7"/>
<evidence type="ECO:0000312" key="8">
    <source>
        <dbReference type="RGD" id="61911"/>
    </source>
</evidence>
<evidence type="ECO:0007829" key="9">
    <source>
        <dbReference type="PDB" id="1KJT"/>
    </source>
</evidence>
<reference key="1">
    <citation type="journal article" date="2000" name="J. Neurochem.">
        <title>Binding of the GABA(A) receptor-associated protein (GABARAP) to microtubules and microfilaments suggests involvement of the cytoskeleton in GABARAPGABA(A) receptor interaction.</title>
        <authorList>
            <person name="Wang H."/>
            <person name="Olsen R.W."/>
        </authorList>
    </citation>
    <scope>NUCLEOTIDE SEQUENCE [MRNA]</scope>
    <scope>SUBCELLULAR LOCATION</scope>
    <scope>INTERACTION WITH BETA-TUBULIN</scope>
</reference>
<reference key="2">
    <citation type="journal article" date="2004" name="Genome Res.">
        <title>The status, quality, and expansion of the NIH full-length cDNA project: the Mammalian Gene Collection (MGC).</title>
        <authorList>
            <consortium name="The MGC Project Team"/>
        </authorList>
    </citation>
    <scope>NUCLEOTIDE SEQUENCE [LARGE SCALE MRNA]</scope>
    <source>
        <tissue>Pituitary</tissue>
    </source>
</reference>
<reference key="3">
    <citation type="journal article" date="2000" name="Proc. Natl. Acad. Sci. U.S.A.">
        <title>The gamma-aminobutyric acid type A receptor (GABAAR)-associated protein GABARAP interacts with gephyrin but is not involved in receptor anchoring at the synapse.</title>
        <authorList>
            <person name="Kneussel M."/>
            <person name="Haverkamp S."/>
            <person name="Fuhrmann J.C."/>
            <person name="Wang H."/>
            <person name="Waessle H."/>
            <person name="Olsen R.W."/>
            <person name="Betz H."/>
        </authorList>
    </citation>
    <scope>INTERACTION WITH GPHN</scope>
</reference>
<reference key="4">
    <citation type="journal article" date="2001" name="Mol. Cell. Neurosci.">
        <title>The subcellular distribution of GABARAP and its ability to interact with NSF suggest a role for this protein in the intracellular transport of GABA(A) receptors.</title>
        <authorList>
            <person name="Kittler J.T."/>
            <person name="Rostaing P."/>
            <person name="Schiavo G."/>
            <person name="Fritschy J.-M."/>
            <person name="Olsen R."/>
            <person name="Triller A."/>
            <person name="Moss S.J."/>
        </authorList>
    </citation>
    <scope>FUNCTION</scope>
    <scope>SUBCELLULAR LOCATION</scope>
    <scope>TISSUE SPECIFICITY</scope>
    <scope>INTERACTION WITH NSF</scope>
</reference>
<reference key="5">
    <citation type="journal article" date="2014" name="Eur. J. Cell Biol.">
        <title>The kinesin KIF21B participates in the cell surface delivery of gamma2 subunit-containing GABAA receptors.</title>
        <authorList>
            <person name="Labonte D."/>
            <person name="Thies E."/>
            <person name="Kneussel M."/>
        </authorList>
    </citation>
    <scope>INTERACTION WITH KIF21B</scope>
    <scope>SUBCELLULAR LOCATION</scope>
    <scope>TISSUE SPECIFICITY</scope>
</reference>
<reference key="6">
    <citation type="journal article" date="2002" name="EMBO Rep.">
        <title>Crystal structure of the GABA(A)-receptor-associated protein, GABARAP.</title>
        <authorList>
            <person name="Bavro V.N."/>
            <person name="Sola M."/>
            <person name="Bracher A."/>
            <person name="Kneussel M."/>
            <person name="Betz H."/>
            <person name="Weissenhorn W."/>
        </authorList>
    </citation>
    <scope>X-RAY CRYSTALLOGRAPHY (2.0 ANGSTROMS)</scope>
</reference>
<sequence>MKFVYKEEHPFEKRRSEGEKIRKKYPDRVPVIVEKAPKARIGDLDKKKYLVPSDLTVGQFYFLIRKRIHLRAEDALFFFVNNVIPPTSATMGQLYQEHHEEDFFLYIAYSDESVYGL</sequence>